<organism>
    <name type="scientific">Mus musculus</name>
    <name type="common">Mouse</name>
    <dbReference type="NCBI Taxonomy" id="10090"/>
    <lineage>
        <taxon>Eukaryota</taxon>
        <taxon>Metazoa</taxon>
        <taxon>Chordata</taxon>
        <taxon>Craniata</taxon>
        <taxon>Vertebrata</taxon>
        <taxon>Euteleostomi</taxon>
        <taxon>Mammalia</taxon>
        <taxon>Eutheria</taxon>
        <taxon>Euarchontoglires</taxon>
        <taxon>Glires</taxon>
        <taxon>Rodentia</taxon>
        <taxon>Myomorpha</taxon>
        <taxon>Muroidea</taxon>
        <taxon>Muridae</taxon>
        <taxon>Murinae</taxon>
        <taxon>Mus</taxon>
        <taxon>Mus</taxon>
    </lineage>
</organism>
<keyword id="KW-0963">Cytoplasm</keyword>
<keyword id="KW-0507">mRNA processing</keyword>
<keyword id="KW-0508">mRNA splicing</keyword>
<keyword id="KW-0539">Nucleus</keyword>
<keyword id="KW-0597">Phosphoprotein</keyword>
<keyword id="KW-1185">Reference proteome</keyword>
<protein>
    <recommendedName>
        <fullName>Gem-associated protein 6</fullName>
        <shortName>Gemin-6</shortName>
    </recommendedName>
</protein>
<evidence type="ECO:0000250" key="1"/>
<evidence type="ECO:0000250" key="2">
    <source>
        <dbReference type="UniProtKB" id="Q8WXD5"/>
    </source>
</evidence>
<evidence type="ECO:0000255" key="3">
    <source>
        <dbReference type="PROSITE-ProRule" id="PRU01345"/>
    </source>
</evidence>
<evidence type="ECO:0000255" key="4">
    <source>
        <dbReference type="PROSITE-ProRule" id="PRU01346"/>
    </source>
</evidence>
<evidence type="ECO:0000305" key="5"/>
<dbReference type="EMBL" id="AK011454">
    <property type="protein sequence ID" value="BAB27627.1"/>
    <property type="molecule type" value="mRNA"/>
</dbReference>
<dbReference type="EMBL" id="AK013396">
    <property type="protein sequence ID" value="BAB28830.1"/>
    <property type="molecule type" value="mRNA"/>
</dbReference>
<dbReference type="EMBL" id="AK018385">
    <property type="protein sequence ID" value="BAB31187.1"/>
    <property type="molecule type" value="mRNA"/>
</dbReference>
<dbReference type="EMBL" id="AK020147">
    <property type="protein sequence ID" value="BAB32011.1"/>
    <property type="molecule type" value="mRNA"/>
</dbReference>
<dbReference type="EMBL" id="AK157745">
    <property type="protein sequence ID" value="BAE34178.1"/>
    <property type="molecule type" value="mRNA"/>
</dbReference>
<dbReference type="EMBL" id="AK167680">
    <property type="protein sequence ID" value="BAE39729.1"/>
    <property type="molecule type" value="mRNA"/>
</dbReference>
<dbReference type="EMBL" id="AK167920">
    <property type="protein sequence ID" value="BAE39927.1"/>
    <property type="molecule type" value="mRNA"/>
</dbReference>
<dbReference type="EMBL" id="BC025157">
    <property type="protein sequence ID" value="AAH25157.1"/>
    <property type="molecule type" value="mRNA"/>
</dbReference>
<dbReference type="CCDS" id="CCDS28989.1"/>
<dbReference type="RefSeq" id="NP_001342387.1">
    <property type="nucleotide sequence ID" value="NM_001355458.1"/>
</dbReference>
<dbReference type="RefSeq" id="NP_080329.1">
    <property type="nucleotide sequence ID" value="NM_026053.4"/>
</dbReference>
<dbReference type="RefSeq" id="XP_011244883.1">
    <property type="nucleotide sequence ID" value="XM_011246581.3"/>
</dbReference>
<dbReference type="RefSeq" id="XP_011244884.1">
    <property type="nucleotide sequence ID" value="XM_011246582.1"/>
</dbReference>
<dbReference type="SMR" id="Q9CX53"/>
<dbReference type="FunCoup" id="Q9CX53">
    <property type="interactions" value="2522"/>
</dbReference>
<dbReference type="IntAct" id="Q9CX53">
    <property type="interactions" value="1"/>
</dbReference>
<dbReference type="MINT" id="Q9CX53"/>
<dbReference type="STRING" id="10090.ENSMUSP00000063554"/>
<dbReference type="GlyGen" id="Q9CX53">
    <property type="glycosylation" value="1 site, 1 O-linked glycan (1 site)"/>
</dbReference>
<dbReference type="iPTMnet" id="Q9CX53"/>
<dbReference type="PhosphoSitePlus" id="Q9CX53"/>
<dbReference type="PaxDb" id="10090-ENSMUSP00000063554"/>
<dbReference type="PeptideAtlas" id="Q9CX53"/>
<dbReference type="ProteomicsDB" id="271209"/>
<dbReference type="Pumba" id="Q9CX53"/>
<dbReference type="Antibodypedia" id="29530">
    <property type="antibodies" value="174 antibodies from 26 providers"/>
</dbReference>
<dbReference type="DNASU" id="67242"/>
<dbReference type="Ensembl" id="ENSMUST00000069486.13">
    <property type="protein sequence ID" value="ENSMUSP00000063554.7"/>
    <property type="gene ID" value="ENSMUSG00000055760.13"/>
</dbReference>
<dbReference type="GeneID" id="67242"/>
<dbReference type="KEGG" id="mmu:67242"/>
<dbReference type="UCSC" id="uc008dqv.1">
    <property type="organism name" value="mouse"/>
</dbReference>
<dbReference type="AGR" id="MGI:1914492"/>
<dbReference type="CTD" id="79833"/>
<dbReference type="MGI" id="MGI:1914492">
    <property type="gene designation" value="Gemin6"/>
</dbReference>
<dbReference type="VEuPathDB" id="HostDB:ENSMUSG00000055760"/>
<dbReference type="eggNOG" id="ENOG502RZTW">
    <property type="taxonomic scope" value="Eukaryota"/>
</dbReference>
<dbReference type="GeneTree" id="ENSGT00390000006712"/>
<dbReference type="HOGENOM" id="CLU_127294_0_0_1"/>
<dbReference type="InParanoid" id="Q9CX53"/>
<dbReference type="OMA" id="LEWEDYV"/>
<dbReference type="OrthoDB" id="77463at2759"/>
<dbReference type="PhylomeDB" id="Q9CX53"/>
<dbReference type="TreeFam" id="TF314693"/>
<dbReference type="Reactome" id="R-MMU-191859">
    <property type="pathway name" value="snRNP Assembly"/>
</dbReference>
<dbReference type="BioGRID-ORCS" id="67242">
    <property type="hits" value="26 hits in 80 CRISPR screens"/>
</dbReference>
<dbReference type="ChiTaRS" id="Gemin6">
    <property type="organism name" value="mouse"/>
</dbReference>
<dbReference type="PRO" id="PR:Q9CX53"/>
<dbReference type="Proteomes" id="UP000000589">
    <property type="component" value="Chromosome 17"/>
</dbReference>
<dbReference type="RNAct" id="Q9CX53">
    <property type="molecule type" value="protein"/>
</dbReference>
<dbReference type="Bgee" id="ENSMUSG00000055760">
    <property type="expression patterns" value="Expressed in epiblast (generic) and 67 other cell types or tissues"/>
</dbReference>
<dbReference type="GO" id="GO:0005829">
    <property type="term" value="C:cytosol"/>
    <property type="evidence" value="ECO:0000250"/>
    <property type="project" value="UniProtKB"/>
</dbReference>
<dbReference type="GO" id="GO:0097504">
    <property type="term" value="C:Gemini of Cajal bodies"/>
    <property type="evidence" value="ECO:0000250"/>
    <property type="project" value="UniProtKB"/>
</dbReference>
<dbReference type="GO" id="GO:0016604">
    <property type="term" value="C:nuclear body"/>
    <property type="evidence" value="ECO:0000250"/>
    <property type="project" value="UniProtKB"/>
</dbReference>
<dbReference type="GO" id="GO:0032797">
    <property type="term" value="C:SMN complex"/>
    <property type="evidence" value="ECO:0000250"/>
    <property type="project" value="UniProtKB"/>
</dbReference>
<dbReference type="GO" id="GO:0034719">
    <property type="term" value="C:SMN-Sm protein complex"/>
    <property type="evidence" value="ECO:0000250"/>
    <property type="project" value="UniProtKB"/>
</dbReference>
<dbReference type="GO" id="GO:0003723">
    <property type="term" value="F:RNA binding"/>
    <property type="evidence" value="ECO:0007669"/>
    <property type="project" value="InterPro"/>
</dbReference>
<dbReference type="GO" id="GO:0000245">
    <property type="term" value="P:spliceosomal complex assembly"/>
    <property type="evidence" value="ECO:0007669"/>
    <property type="project" value="InterPro"/>
</dbReference>
<dbReference type="GO" id="GO:0000387">
    <property type="term" value="P:spliceosomal snRNP assembly"/>
    <property type="evidence" value="ECO:0000250"/>
    <property type="project" value="UniProtKB"/>
</dbReference>
<dbReference type="CDD" id="cd11676">
    <property type="entry name" value="Gemin6"/>
    <property type="match status" value="1"/>
</dbReference>
<dbReference type="FunFam" id="2.30.30.100:FF:000038">
    <property type="entry name" value="Gem-associated protein 6"/>
    <property type="match status" value="1"/>
</dbReference>
<dbReference type="Gene3D" id="2.30.30.100">
    <property type="match status" value="1"/>
</dbReference>
<dbReference type="InterPro" id="IPR047574">
    <property type="entry name" value="AD"/>
</dbReference>
<dbReference type="InterPro" id="IPR009422">
    <property type="entry name" value="Gemin6"/>
</dbReference>
<dbReference type="InterPro" id="IPR046856">
    <property type="entry name" value="Gemin6_C"/>
</dbReference>
<dbReference type="InterPro" id="IPR046857">
    <property type="entry name" value="Gemin6_Sm-like_dom"/>
</dbReference>
<dbReference type="InterPro" id="IPR047575">
    <property type="entry name" value="Sm"/>
</dbReference>
<dbReference type="PANTHER" id="PTHR14710">
    <property type="entry name" value="GEM-ASSOCIATED PROTEIN 6"/>
    <property type="match status" value="1"/>
</dbReference>
<dbReference type="PANTHER" id="PTHR14710:SF2">
    <property type="entry name" value="GEM-ASSOCIATED PROTEIN 6"/>
    <property type="match status" value="1"/>
</dbReference>
<dbReference type="Pfam" id="PF06372">
    <property type="entry name" value="Gemin6"/>
    <property type="match status" value="1"/>
</dbReference>
<dbReference type="Pfam" id="PF20417">
    <property type="entry name" value="Gemin6_C"/>
    <property type="match status" value="1"/>
</dbReference>
<dbReference type="PROSITE" id="PS52001">
    <property type="entry name" value="AD"/>
    <property type="match status" value="1"/>
</dbReference>
<dbReference type="PROSITE" id="PS52002">
    <property type="entry name" value="SM"/>
    <property type="match status" value="1"/>
</dbReference>
<reference key="1">
    <citation type="journal article" date="2005" name="Science">
        <title>The transcriptional landscape of the mammalian genome.</title>
        <authorList>
            <person name="Carninci P."/>
            <person name="Kasukawa T."/>
            <person name="Katayama S."/>
            <person name="Gough J."/>
            <person name="Frith M.C."/>
            <person name="Maeda N."/>
            <person name="Oyama R."/>
            <person name="Ravasi T."/>
            <person name="Lenhard B."/>
            <person name="Wells C."/>
            <person name="Kodzius R."/>
            <person name="Shimokawa K."/>
            <person name="Bajic V.B."/>
            <person name="Brenner S.E."/>
            <person name="Batalov S."/>
            <person name="Forrest A.R."/>
            <person name="Zavolan M."/>
            <person name="Davis M.J."/>
            <person name="Wilming L.G."/>
            <person name="Aidinis V."/>
            <person name="Allen J.E."/>
            <person name="Ambesi-Impiombato A."/>
            <person name="Apweiler R."/>
            <person name="Aturaliya R.N."/>
            <person name="Bailey T.L."/>
            <person name="Bansal M."/>
            <person name="Baxter L."/>
            <person name="Beisel K.W."/>
            <person name="Bersano T."/>
            <person name="Bono H."/>
            <person name="Chalk A.M."/>
            <person name="Chiu K.P."/>
            <person name="Choudhary V."/>
            <person name="Christoffels A."/>
            <person name="Clutterbuck D.R."/>
            <person name="Crowe M.L."/>
            <person name="Dalla E."/>
            <person name="Dalrymple B.P."/>
            <person name="de Bono B."/>
            <person name="Della Gatta G."/>
            <person name="di Bernardo D."/>
            <person name="Down T."/>
            <person name="Engstrom P."/>
            <person name="Fagiolini M."/>
            <person name="Faulkner G."/>
            <person name="Fletcher C.F."/>
            <person name="Fukushima T."/>
            <person name="Furuno M."/>
            <person name="Futaki S."/>
            <person name="Gariboldi M."/>
            <person name="Georgii-Hemming P."/>
            <person name="Gingeras T.R."/>
            <person name="Gojobori T."/>
            <person name="Green R.E."/>
            <person name="Gustincich S."/>
            <person name="Harbers M."/>
            <person name="Hayashi Y."/>
            <person name="Hensch T.K."/>
            <person name="Hirokawa N."/>
            <person name="Hill D."/>
            <person name="Huminiecki L."/>
            <person name="Iacono M."/>
            <person name="Ikeo K."/>
            <person name="Iwama A."/>
            <person name="Ishikawa T."/>
            <person name="Jakt M."/>
            <person name="Kanapin A."/>
            <person name="Katoh M."/>
            <person name="Kawasawa Y."/>
            <person name="Kelso J."/>
            <person name="Kitamura H."/>
            <person name="Kitano H."/>
            <person name="Kollias G."/>
            <person name="Krishnan S.P."/>
            <person name="Kruger A."/>
            <person name="Kummerfeld S.K."/>
            <person name="Kurochkin I.V."/>
            <person name="Lareau L.F."/>
            <person name="Lazarevic D."/>
            <person name="Lipovich L."/>
            <person name="Liu J."/>
            <person name="Liuni S."/>
            <person name="McWilliam S."/>
            <person name="Madan Babu M."/>
            <person name="Madera M."/>
            <person name="Marchionni L."/>
            <person name="Matsuda H."/>
            <person name="Matsuzawa S."/>
            <person name="Miki H."/>
            <person name="Mignone F."/>
            <person name="Miyake S."/>
            <person name="Morris K."/>
            <person name="Mottagui-Tabar S."/>
            <person name="Mulder N."/>
            <person name="Nakano N."/>
            <person name="Nakauchi H."/>
            <person name="Ng P."/>
            <person name="Nilsson R."/>
            <person name="Nishiguchi S."/>
            <person name="Nishikawa S."/>
            <person name="Nori F."/>
            <person name="Ohara O."/>
            <person name="Okazaki Y."/>
            <person name="Orlando V."/>
            <person name="Pang K.C."/>
            <person name="Pavan W.J."/>
            <person name="Pavesi G."/>
            <person name="Pesole G."/>
            <person name="Petrovsky N."/>
            <person name="Piazza S."/>
            <person name="Reed J."/>
            <person name="Reid J.F."/>
            <person name="Ring B.Z."/>
            <person name="Ringwald M."/>
            <person name="Rost B."/>
            <person name="Ruan Y."/>
            <person name="Salzberg S.L."/>
            <person name="Sandelin A."/>
            <person name="Schneider C."/>
            <person name="Schoenbach C."/>
            <person name="Sekiguchi K."/>
            <person name="Semple C.A."/>
            <person name="Seno S."/>
            <person name="Sessa L."/>
            <person name="Sheng Y."/>
            <person name="Shibata Y."/>
            <person name="Shimada H."/>
            <person name="Shimada K."/>
            <person name="Silva D."/>
            <person name="Sinclair B."/>
            <person name="Sperling S."/>
            <person name="Stupka E."/>
            <person name="Sugiura K."/>
            <person name="Sultana R."/>
            <person name="Takenaka Y."/>
            <person name="Taki K."/>
            <person name="Tammoja K."/>
            <person name="Tan S.L."/>
            <person name="Tang S."/>
            <person name="Taylor M.S."/>
            <person name="Tegner J."/>
            <person name="Teichmann S.A."/>
            <person name="Ueda H.R."/>
            <person name="van Nimwegen E."/>
            <person name="Verardo R."/>
            <person name="Wei C.L."/>
            <person name="Yagi K."/>
            <person name="Yamanishi H."/>
            <person name="Zabarovsky E."/>
            <person name="Zhu S."/>
            <person name="Zimmer A."/>
            <person name="Hide W."/>
            <person name="Bult C."/>
            <person name="Grimmond S.M."/>
            <person name="Teasdale R.D."/>
            <person name="Liu E.T."/>
            <person name="Brusic V."/>
            <person name="Quackenbush J."/>
            <person name="Wahlestedt C."/>
            <person name="Mattick J.S."/>
            <person name="Hume D.A."/>
            <person name="Kai C."/>
            <person name="Sasaki D."/>
            <person name="Tomaru Y."/>
            <person name="Fukuda S."/>
            <person name="Kanamori-Katayama M."/>
            <person name="Suzuki M."/>
            <person name="Aoki J."/>
            <person name="Arakawa T."/>
            <person name="Iida J."/>
            <person name="Imamura K."/>
            <person name="Itoh M."/>
            <person name="Kato T."/>
            <person name="Kawaji H."/>
            <person name="Kawagashira N."/>
            <person name="Kawashima T."/>
            <person name="Kojima M."/>
            <person name="Kondo S."/>
            <person name="Konno H."/>
            <person name="Nakano K."/>
            <person name="Ninomiya N."/>
            <person name="Nishio T."/>
            <person name="Okada M."/>
            <person name="Plessy C."/>
            <person name="Shibata K."/>
            <person name="Shiraki T."/>
            <person name="Suzuki S."/>
            <person name="Tagami M."/>
            <person name="Waki K."/>
            <person name="Watahiki A."/>
            <person name="Okamura-Oho Y."/>
            <person name="Suzuki H."/>
            <person name="Kawai J."/>
            <person name="Hayashizaki Y."/>
        </authorList>
    </citation>
    <scope>NUCLEOTIDE SEQUENCE [LARGE SCALE MRNA]</scope>
    <source>
        <strain>BALB/cJ</strain>
        <strain>C57BL/6J</strain>
        <tissue>Embryo</tissue>
        <tissue>Liver</tissue>
        <tissue>Lung</tissue>
        <tissue>Mesonephros</tissue>
    </source>
</reference>
<reference key="2">
    <citation type="journal article" date="2004" name="Genome Res.">
        <title>The status, quality, and expansion of the NIH full-length cDNA project: the Mammalian Gene Collection (MGC).</title>
        <authorList>
            <consortium name="The MGC Project Team"/>
        </authorList>
    </citation>
    <scope>NUCLEOTIDE SEQUENCE [LARGE SCALE MRNA]</scope>
</reference>
<reference key="3">
    <citation type="journal article" date="2010" name="Cell">
        <title>A tissue-specific atlas of mouse protein phosphorylation and expression.</title>
        <authorList>
            <person name="Huttlin E.L."/>
            <person name="Jedrychowski M.P."/>
            <person name="Elias J.E."/>
            <person name="Goswami T."/>
            <person name="Rad R."/>
            <person name="Beausoleil S.A."/>
            <person name="Villen J."/>
            <person name="Haas W."/>
            <person name="Sowa M.E."/>
            <person name="Gygi S.P."/>
        </authorList>
    </citation>
    <scope>IDENTIFICATION BY MASS SPECTROMETRY [LARGE SCALE ANALYSIS]</scope>
    <source>
        <tissue>Spleen</tissue>
        <tissue>Testis</tissue>
    </source>
</reference>
<feature type="chain" id="PRO_0000087461" description="Gem-associated protein 6">
    <location>
        <begin position="1"/>
        <end position="166"/>
    </location>
</feature>
<feature type="domain" description="Sm" evidence="4">
    <location>
        <begin position="4"/>
        <end position="73"/>
    </location>
</feature>
<feature type="domain" description="AD" evidence="3">
    <location>
        <begin position="68"/>
        <end position="166"/>
    </location>
</feature>
<feature type="modified residue" description="Phosphoserine" evidence="2">
    <location>
        <position position="94"/>
    </location>
</feature>
<feature type="modified residue" description="Phosphoserine" evidence="2">
    <location>
        <position position="165"/>
    </location>
</feature>
<feature type="sequence conflict" description="In Ref. 1; BAB31187." evidence="5" ref="1">
    <original>G</original>
    <variation>S</variation>
    <location>
        <position position="52"/>
    </location>
</feature>
<feature type="sequence conflict" description="In Ref. 1; BAB32011." evidence="5" ref="1">
    <original>L</original>
    <variation>F</variation>
    <location>
        <position position="157"/>
    </location>
</feature>
<comment type="function">
    <text evidence="2">The SMN complex catalyzes the assembly of small nuclear ribonucleoproteins (snRNPs), the building blocks of the spliceosome, and thereby plays an important role in the splicing of cellular pre-mRNAs. Most spliceosomal snRNPs contain a common set of Sm proteins SNRPB, SNRPD1, SNRPD2, SNRPD3, SNRPE, SNRPF and SNRPG that assemble in a heptameric protein ring on the Sm site of the small nuclear RNA to form the core snRNP (Sm core). In the cytosol, the Sm proteins SNRPD1, SNRPD2, SNRPE, SNRPF and SNRPG are trapped in an inactive 6S pICln-Sm complex by the chaperone CLNS1A that controls the assembly of the core snRNP. To assemble core snRNPs, the SMN complex accepts the trapped 5Sm proteins from CLNS1A forming an intermediate. Binding of snRNA inside 5Sm triggers eviction of the SMN complex, thereby allowing binding of SNRPD3 and SNRPB to complete assembly of the core snRNP (By similarity).</text>
</comment>
<comment type="subunit">
    <text evidence="2">Part of the core SMN complex that contains SMN1, GEMIN2/SIP1, DDX20/GEMIN3, GEMIN4, GEMIN5, GEMIN6, GEMIN7, GEMIN8 and STRAP/UNRIP. Part of the SMN-Sm complex that contains SMN1, GEMIN2/SIP1, DDX20/GEMIN3, GEMIN4, GEMIN5, GEMIN6, GEMIN7, GEMIN8, STRAP/UNRIP and the Sm proteins SNRPB, SNRPD1, SNRPD2, SNRPD3, SNRPE, SNRPF and SNRPG. Interacts with GEMIN7; the interaction is direct. Interacts with GEMIN8; the interaction is direct. Interacts with SNRPB, SNRPD2, SNRPD3 and SNRPE; the interaction is direct.</text>
</comment>
<comment type="subcellular location">
    <subcellularLocation>
        <location evidence="2">Nucleus</location>
        <location evidence="2">Nucleoplasm</location>
    </subcellularLocation>
    <subcellularLocation>
        <location evidence="2">Nucleus</location>
        <location evidence="2">Gem</location>
    </subcellularLocation>
    <subcellularLocation>
        <location evidence="2">Cytoplasm</location>
    </subcellularLocation>
    <text evidence="1">Found both in the nucleoplasm and in nuclear bodies called gems (Gemini of Cajal bodies) that are often in proximity to Cajal (coiled) bodies. Also found in the cytoplasm (By similarity).</text>
</comment>
<gene>
    <name type="primary">Gemin6</name>
</gene>
<name>GEMI6_MOUSE</name>
<sequence>MSEWMKKSPLEWEDYVYKEVRVIACEKEYKGWLLTTDPVSANIVLVNFLEDGRLSVTGIMGHSVQTVETISEGDHRVREKLMHVFASGDCKGYSPEDLEEKRTSLKKWLEKNHIPVTEQGDAQRTLCVAGVLTIDPPYAPENCSSSNEIILSRIQDLIQGHLSASQ</sequence>
<proteinExistence type="evidence at protein level"/>
<accession>Q9CX53</accession>
<accession>Q3TIW7</accession>
<accession>Q9CQI0</accession>
<accession>Q9CXC5</accession>